<gene>
    <name type="primary">FBXL13</name>
    <name evidence="3" type="synonym">DRC6</name>
    <name type="synonym">FBL13</name>
</gene>
<keyword id="KW-0025">Alternative splicing</keyword>
<keyword id="KW-0966">Cell projection</keyword>
<keyword id="KW-0969">Cilium</keyword>
<keyword id="KW-0963">Cytoplasm</keyword>
<keyword id="KW-0206">Cytoskeleton</keyword>
<keyword id="KW-0282">Flagellum</keyword>
<keyword id="KW-0433">Leucine-rich repeat</keyword>
<keyword id="KW-1267">Proteomics identification</keyword>
<keyword id="KW-1185">Reference proteome</keyword>
<keyword id="KW-0677">Repeat</keyword>
<keyword id="KW-0833">Ubl conjugation pathway</keyword>
<reference key="1">
    <citation type="journal article" date="2005" name="Genomics">
        <title>Isolation and analysis of candidate myeloid tumor suppressor genes from a commonly deleted segment of 7q22.</title>
        <authorList>
            <person name="Curtiss N.P."/>
            <person name="Bonifas J.M."/>
            <person name="Lauchle J.O."/>
            <person name="Balkman J.D."/>
            <person name="Kratz C.P."/>
            <person name="Emerling B.M."/>
            <person name="Green E.D."/>
            <person name="Le Beau M.M."/>
            <person name="Shannon K.M."/>
        </authorList>
    </citation>
    <scope>NUCLEOTIDE SEQUENCE [MRNA] (ISOFORMS 3 AND 4)</scope>
</reference>
<reference key="2">
    <citation type="journal article" date="2004" name="Nat. Genet.">
        <title>Complete sequencing and characterization of 21,243 full-length human cDNAs.</title>
        <authorList>
            <person name="Ota T."/>
            <person name="Suzuki Y."/>
            <person name="Nishikawa T."/>
            <person name="Otsuki T."/>
            <person name="Sugiyama T."/>
            <person name="Irie R."/>
            <person name="Wakamatsu A."/>
            <person name="Hayashi K."/>
            <person name="Sato H."/>
            <person name="Nagai K."/>
            <person name="Kimura K."/>
            <person name="Makita H."/>
            <person name="Sekine M."/>
            <person name="Obayashi M."/>
            <person name="Nishi T."/>
            <person name="Shibahara T."/>
            <person name="Tanaka T."/>
            <person name="Ishii S."/>
            <person name="Yamamoto J."/>
            <person name="Saito K."/>
            <person name="Kawai Y."/>
            <person name="Isono Y."/>
            <person name="Nakamura Y."/>
            <person name="Nagahari K."/>
            <person name="Murakami K."/>
            <person name="Yasuda T."/>
            <person name="Iwayanagi T."/>
            <person name="Wagatsuma M."/>
            <person name="Shiratori A."/>
            <person name="Sudo H."/>
            <person name="Hosoiri T."/>
            <person name="Kaku Y."/>
            <person name="Kodaira H."/>
            <person name="Kondo H."/>
            <person name="Sugawara M."/>
            <person name="Takahashi M."/>
            <person name="Kanda K."/>
            <person name="Yokoi T."/>
            <person name="Furuya T."/>
            <person name="Kikkawa E."/>
            <person name="Omura Y."/>
            <person name="Abe K."/>
            <person name="Kamihara K."/>
            <person name="Katsuta N."/>
            <person name="Sato K."/>
            <person name="Tanikawa M."/>
            <person name="Yamazaki M."/>
            <person name="Ninomiya K."/>
            <person name="Ishibashi T."/>
            <person name="Yamashita H."/>
            <person name="Murakawa K."/>
            <person name="Fujimori K."/>
            <person name="Tanai H."/>
            <person name="Kimata M."/>
            <person name="Watanabe M."/>
            <person name="Hiraoka S."/>
            <person name="Chiba Y."/>
            <person name="Ishida S."/>
            <person name="Ono Y."/>
            <person name="Takiguchi S."/>
            <person name="Watanabe S."/>
            <person name="Yosida M."/>
            <person name="Hotuta T."/>
            <person name="Kusano J."/>
            <person name="Kanehori K."/>
            <person name="Takahashi-Fujii A."/>
            <person name="Hara H."/>
            <person name="Tanase T.-O."/>
            <person name="Nomura Y."/>
            <person name="Togiya S."/>
            <person name="Komai F."/>
            <person name="Hara R."/>
            <person name="Takeuchi K."/>
            <person name="Arita M."/>
            <person name="Imose N."/>
            <person name="Musashino K."/>
            <person name="Yuuki H."/>
            <person name="Oshima A."/>
            <person name="Sasaki N."/>
            <person name="Aotsuka S."/>
            <person name="Yoshikawa Y."/>
            <person name="Matsunawa H."/>
            <person name="Ichihara T."/>
            <person name="Shiohata N."/>
            <person name="Sano S."/>
            <person name="Moriya S."/>
            <person name="Momiyama H."/>
            <person name="Satoh N."/>
            <person name="Takami S."/>
            <person name="Terashima Y."/>
            <person name="Suzuki O."/>
            <person name="Nakagawa S."/>
            <person name="Senoh A."/>
            <person name="Mizoguchi H."/>
            <person name="Goto Y."/>
            <person name="Shimizu F."/>
            <person name="Wakebe H."/>
            <person name="Hishigaki H."/>
            <person name="Watanabe T."/>
            <person name="Sugiyama A."/>
            <person name="Takemoto M."/>
            <person name="Kawakami B."/>
            <person name="Yamazaki M."/>
            <person name="Watanabe K."/>
            <person name="Kumagai A."/>
            <person name="Itakura S."/>
            <person name="Fukuzumi Y."/>
            <person name="Fujimori Y."/>
            <person name="Komiyama M."/>
            <person name="Tashiro H."/>
            <person name="Tanigami A."/>
            <person name="Fujiwara T."/>
            <person name="Ono T."/>
            <person name="Yamada K."/>
            <person name="Fujii Y."/>
            <person name="Ozaki K."/>
            <person name="Hirao M."/>
            <person name="Ohmori Y."/>
            <person name="Kawabata A."/>
            <person name="Hikiji T."/>
            <person name="Kobatake N."/>
            <person name="Inagaki H."/>
            <person name="Ikema Y."/>
            <person name="Okamoto S."/>
            <person name="Okitani R."/>
            <person name="Kawakami T."/>
            <person name="Noguchi S."/>
            <person name="Itoh T."/>
            <person name="Shigeta K."/>
            <person name="Senba T."/>
            <person name="Matsumura K."/>
            <person name="Nakajima Y."/>
            <person name="Mizuno T."/>
            <person name="Morinaga M."/>
            <person name="Sasaki M."/>
            <person name="Togashi T."/>
            <person name="Oyama M."/>
            <person name="Hata H."/>
            <person name="Watanabe M."/>
            <person name="Komatsu T."/>
            <person name="Mizushima-Sugano J."/>
            <person name="Satoh T."/>
            <person name="Shirai Y."/>
            <person name="Takahashi Y."/>
            <person name="Nakagawa K."/>
            <person name="Okumura K."/>
            <person name="Nagase T."/>
            <person name="Nomura N."/>
            <person name="Kikuchi H."/>
            <person name="Masuho Y."/>
            <person name="Yamashita R."/>
            <person name="Nakai K."/>
            <person name="Yada T."/>
            <person name="Nakamura Y."/>
            <person name="Ohara O."/>
            <person name="Isogai T."/>
            <person name="Sugano S."/>
        </authorList>
    </citation>
    <scope>NUCLEOTIDE SEQUENCE [LARGE SCALE MRNA] (ISOFORM 1)</scope>
    <scope>VARIANT MET-74</scope>
    <source>
        <tissue>Testis</tissue>
    </source>
</reference>
<reference key="3">
    <citation type="journal article" date="2003" name="Nature">
        <title>The DNA sequence of human chromosome 7.</title>
        <authorList>
            <person name="Hillier L.W."/>
            <person name="Fulton R.S."/>
            <person name="Fulton L.A."/>
            <person name="Graves T.A."/>
            <person name="Pepin K.H."/>
            <person name="Wagner-McPherson C."/>
            <person name="Layman D."/>
            <person name="Maas J."/>
            <person name="Jaeger S."/>
            <person name="Walker R."/>
            <person name="Wylie K."/>
            <person name="Sekhon M."/>
            <person name="Becker M.C."/>
            <person name="O'Laughlin M.D."/>
            <person name="Schaller M.E."/>
            <person name="Fewell G.A."/>
            <person name="Delehaunty K.D."/>
            <person name="Miner T.L."/>
            <person name="Nash W.E."/>
            <person name="Cordes M."/>
            <person name="Du H."/>
            <person name="Sun H."/>
            <person name="Edwards J."/>
            <person name="Bradshaw-Cordum H."/>
            <person name="Ali J."/>
            <person name="Andrews S."/>
            <person name="Isak A."/>
            <person name="Vanbrunt A."/>
            <person name="Nguyen C."/>
            <person name="Du F."/>
            <person name="Lamar B."/>
            <person name="Courtney L."/>
            <person name="Kalicki J."/>
            <person name="Ozersky P."/>
            <person name="Bielicki L."/>
            <person name="Scott K."/>
            <person name="Holmes A."/>
            <person name="Harkins R."/>
            <person name="Harris A."/>
            <person name="Strong C.M."/>
            <person name="Hou S."/>
            <person name="Tomlinson C."/>
            <person name="Dauphin-Kohlberg S."/>
            <person name="Kozlowicz-Reilly A."/>
            <person name="Leonard S."/>
            <person name="Rohlfing T."/>
            <person name="Rock S.M."/>
            <person name="Tin-Wollam A.-M."/>
            <person name="Abbott A."/>
            <person name="Minx P."/>
            <person name="Maupin R."/>
            <person name="Strowmatt C."/>
            <person name="Latreille P."/>
            <person name="Miller N."/>
            <person name="Johnson D."/>
            <person name="Murray J."/>
            <person name="Woessner J.P."/>
            <person name="Wendl M.C."/>
            <person name="Yang S.-P."/>
            <person name="Schultz B.R."/>
            <person name="Wallis J.W."/>
            <person name="Spieth J."/>
            <person name="Bieri T.A."/>
            <person name="Nelson J.O."/>
            <person name="Berkowicz N."/>
            <person name="Wohldmann P.E."/>
            <person name="Cook L.L."/>
            <person name="Hickenbotham M.T."/>
            <person name="Eldred J."/>
            <person name="Williams D."/>
            <person name="Bedell J.A."/>
            <person name="Mardis E.R."/>
            <person name="Clifton S.W."/>
            <person name="Chissoe S.L."/>
            <person name="Marra M.A."/>
            <person name="Raymond C."/>
            <person name="Haugen E."/>
            <person name="Gillett W."/>
            <person name="Zhou Y."/>
            <person name="James R."/>
            <person name="Phelps K."/>
            <person name="Iadanoto S."/>
            <person name="Bubb K."/>
            <person name="Simms E."/>
            <person name="Levy R."/>
            <person name="Clendenning J."/>
            <person name="Kaul R."/>
            <person name="Kent W.J."/>
            <person name="Furey T.S."/>
            <person name="Baertsch R.A."/>
            <person name="Brent M.R."/>
            <person name="Keibler E."/>
            <person name="Flicek P."/>
            <person name="Bork P."/>
            <person name="Suyama M."/>
            <person name="Bailey J.A."/>
            <person name="Portnoy M.E."/>
            <person name="Torrents D."/>
            <person name="Chinwalla A.T."/>
            <person name="Gish W.R."/>
            <person name="Eddy S.R."/>
            <person name="McPherson J.D."/>
            <person name="Olson M.V."/>
            <person name="Eichler E.E."/>
            <person name="Green E.D."/>
            <person name="Waterston R.H."/>
            <person name="Wilson R.K."/>
        </authorList>
    </citation>
    <scope>NUCLEOTIDE SEQUENCE [LARGE SCALE GENOMIC DNA]</scope>
</reference>
<reference key="4">
    <citation type="journal article" date="2004" name="Genome Res.">
        <title>The status, quality, and expansion of the NIH full-length cDNA project: the Mammalian Gene Collection (MGC).</title>
        <authorList>
            <consortium name="The MGC Project Team"/>
        </authorList>
    </citation>
    <scope>NUCLEOTIDE SEQUENCE [LARGE SCALE MRNA] (ISOFORM 2)</scope>
    <scope>VARIANTS MET-74 AND GLY-692</scope>
    <source>
        <tissue>Kidney</tissue>
        <tissue>Liver</tissue>
        <tissue>Testis</tissue>
    </source>
</reference>
<reference key="5">
    <citation type="journal article" date="2007" name="BMC Genomics">
        <title>The full-ORF clone resource of the German cDNA consortium.</title>
        <authorList>
            <person name="Bechtel S."/>
            <person name="Rosenfelder H."/>
            <person name="Duda A."/>
            <person name="Schmidt C.P."/>
            <person name="Ernst U."/>
            <person name="Wellenreuther R."/>
            <person name="Mehrle A."/>
            <person name="Schuster C."/>
            <person name="Bahr A."/>
            <person name="Bloecker H."/>
            <person name="Heubner D."/>
            <person name="Hoerlein A."/>
            <person name="Michel G."/>
            <person name="Wedler H."/>
            <person name="Koehrer K."/>
            <person name="Ottenwaelder B."/>
            <person name="Poustka A."/>
            <person name="Wiemann S."/>
            <person name="Schupp I."/>
        </authorList>
    </citation>
    <scope>NUCLEOTIDE SEQUENCE [LARGE SCALE MRNA] OF 285-735</scope>
    <source>
        <tissue>Testis</tissue>
    </source>
</reference>
<reference key="6">
    <citation type="journal article" date="2018" name="EMBO Rep.">
        <title>FBXL13 directs the proteolysis of CEP192 to regulate centrosome homeostasis and cell migration.</title>
        <authorList>
            <person name="Fung E."/>
            <person name="Richter C."/>
            <person name="Yang H.B."/>
            <person name="Schaeffer I."/>
            <person name="Fischer R."/>
            <person name="Kessler B.M."/>
            <person name="Bassermann F."/>
            <person name="D'Angiolella V."/>
        </authorList>
    </citation>
    <scope>FUNCTION</scope>
    <scope>SUBCELLULAR LOCATION</scope>
</reference>
<protein>
    <recommendedName>
        <fullName evidence="11">F-box and leucine-rich repeat protein 13</fullName>
    </recommendedName>
    <alternativeName>
        <fullName>Dynein regulatory complex subunit 6</fullName>
    </alternativeName>
    <alternativeName>
        <fullName>F-box/LRR-repeat protein 13</fullName>
    </alternativeName>
</protein>
<organism>
    <name type="scientific">Homo sapiens</name>
    <name type="common">Human</name>
    <dbReference type="NCBI Taxonomy" id="9606"/>
    <lineage>
        <taxon>Eukaryota</taxon>
        <taxon>Metazoa</taxon>
        <taxon>Chordata</taxon>
        <taxon>Craniata</taxon>
        <taxon>Vertebrata</taxon>
        <taxon>Euteleostomi</taxon>
        <taxon>Mammalia</taxon>
        <taxon>Eutheria</taxon>
        <taxon>Euarchontoglires</taxon>
        <taxon>Primates</taxon>
        <taxon>Haplorrhini</taxon>
        <taxon>Catarrhini</taxon>
        <taxon>Hominidae</taxon>
        <taxon>Homo</taxon>
    </lineage>
</organism>
<name>FXL13_HUMAN</name>
<proteinExistence type="evidence at protein level"/>
<sequence length="735" mass="83924">MTPELMIKACSFYTGHLVKTHFCTWRDIARTNENVVLAEKMNRAVTCYNFRLQKSVFHHWHSYMEDQKEKLKNILLRIQQIIYCHKLTIILTKWRNTARHKSKKKEDELILKHELQLKKWKNRLILKRAAAEESNFPERSSSEVFLVDETLKCDISLLPERAILQIFFYLSLKDVIICGQVNHAWMLMTQLNSLWNAIDFSSVKNVIPDKYIVSTLQRWRLNVLRLNFRGCLLRPKTFRSVSHCRNLQELNVSDCPTFTDESMRHISEGCPGVLCLNLSNTTITNRTMRLLPRHFHNLQNLSLAYCRRFTDKGLQYLNLGNGCHKLIYLDLSGCTQISVQGFRYIANSCTGIMHLTINDMPTLTDNCVKALVEKCSRITSLVFTGAPHISDCTFRALSACKLRKIRFEGNKRVTDASFKFIDKNYPNLSHIYMADCKGITDSSLRSLSPLKQLTVLNLANCVRIGDMGLKQFLDGPASMRIRELNLSNCVRLSDASVMKLSERCPNLNYLSLRNCEHLTAQGIGYIVNIFSLVSIDLSGTDISNEGLNVLSRHKKLKELSVSECYRITDDGIQAFCKSSLILEHLDVSYCSQLSDMIIKALAIYCINLTSLSIAGCPKITDSAMEMLSAKCHYLHILDISGCVLLTDQILEDLQIGCKQLRILKMQYCTNISKKAAQRMSSKVQQQEYNTNDPPRWFGYDREGNPVTELDNITSSKGALELTVKKSTYSSEDQAA</sequence>
<comment type="function">
    <text evidence="2 8">Substrate-recognition component of the SCF (SKP1-CUL1-F-box protein)-type E3 ubiquitin ligase complex. Component of the nexin-dynein regulatory complex (N-DRC), a key regulator of ciliary/flagellar motility which maintains the alignment and integrity of the distal axoneme and regulates microtubule sliding in motile axonemes. Specifically targets CEP192 isoform 3 for ubiquitin-mediated proteolysis and thereby acts as a regulator of microtubule nucleation activity (PubMed:29348145).</text>
</comment>
<comment type="subunit">
    <text evidence="1 2 3">Component of the nexin-dynein regulatory complex (N-DRC). Directly interacts with SKP1 and CUL1. Interacts with TCTE1/DRC5.</text>
</comment>
<comment type="subcellular location">
    <subcellularLocation>
        <location evidence="2">Cytoplasm</location>
        <location evidence="2">Cytoskeleton</location>
        <location evidence="2">Flagellum axoneme</location>
    </subcellularLocation>
    <subcellularLocation>
        <location evidence="8">Cytoplasm</location>
        <location evidence="8">Cytoskeleton</location>
        <location evidence="8">Microtubule organizing center</location>
        <location evidence="8">Centrosome</location>
    </subcellularLocation>
</comment>
<comment type="alternative products">
    <event type="alternative splicing"/>
    <isoform>
        <id>Q8NEE6-1</id>
        <name>1</name>
        <sequence type="displayed"/>
    </isoform>
    <isoform>
        <id>Q8NEE6-2</id>
        <name>2</name>
        <sequence type="described" ref="VSP_013004"/>
    </isoform>
    <isoform>
        <id>Q8NEE6-3</id>
        <name>3</name>
        <sequence type="described" ref="VSP_013005"/>
    </isoform>
    <isoform>
        <id>Q8NEE6-4</id>
        <name>4</name>
        <sequence type="described" ref="VSP_013003"/>
    </isoform>
</comment>
<comment type="similarity">
    <text evidence="12">Belongs to the DRC6 family.</text>
</comment>
<comment type="sequence caution" evidence="12">
    <conflict type="erroneous initiation">
        <sequence resource="EMBL-CDS" id="CAD28506"/>
    </conflict>
    <text>Extended N-terminus.</text>
</comment>
<accession>Q8NEE6</accession>
<accession>C9J565</accession>
<accession>C9J566</accession>
<accession>Q6UVW7</accession>
<accession>Q6UVW8</accession>
<accession>Q75MN5</accession>
<accession>Q86UJ5</accession>
<accession>Q8N7Y4</accession>
<accession>Q8TCL2</accession>
<accession>Q8WUF9</accession>
<accession>Q8WUG0</accession>
<evidence type="ECO:0000250" key="1"/>
<evidence type="ECO:0000250" key="2">
    <source>
        <dbReference type="UniProtKB" id="A8JHD7"/>
    </source>
</evidence>
<evidence type="ECO:0000250" key="3">
    <source>
        <dbReference type="UniProtKB" id="Q8CDU4"/>
    </source>
</evidence>
<evidence type="ECO:0000255" key="4">
    <source>
        <dbReference type="PROSITE-ProRule" id="PRU00080"/>
    </source>
</evidence>
<evidence type="ECO:0000256" key="5">
    <source>
        <dbReference type="SAM" id="MobiDB-lite"/>
    </source>
</evidence>
<evidence type="ECO:0000269" key="6">
    <source>
    </source>
</evidence>
<evidence type="ECO:0000269" key="7">
    <source>
    </source>
</evidence>
<evidence type="ECO:0000269" key="8">
    <source>
    </source>
</evidence>
<evidence type="ECO:0000303" key="9">
    <source>
    </source>
</evidence>
<evidence type="ECO:0000303" key="10">
    <source>
    </source>
</evidence>
<evidence type="ECO:0000303" key="11">
    <source>
    </source>
</evidence>
<evidence type="ECO:0000305" key="12"/>
<dbReference type="EMBL" id="AY359238">
    <property type="protein sequence ID" value="AAR13262.1"/>
    <property type="molecule type" value="mRNA"/>
</dbReference>
<dbReference type="EMBL" id="AY359239">
    <property type="protein sequence ID" value="AAR13263.1"/>
    <property type="molecule type" value="mRNA"/>
</dbReference>
<dbReference type="EMBL" id="AK097537">
    <property type="protein sequence ID" value="BAC05092.1"/>
    <property type="molecule type" value="mRNA"/>
</dbReference>
<dbReference type="EMBL" id="AC005250">
    <property type="protein sequence ID" value="AAP22333.1"/>
    <property type="molecule type" value="Genomic_DNA"/>
</dbReference>
<dbReference type="EMBL" id="AC006477">
    <property type="protein sequence ID" value="AAS00354.1"/>
    <property type="molecule type" value="Genomic_DNA"/>
</dbReference>
<dbReference type="EMBL" id="AC073127">
    <property type="status" value="NOT_ANNOTATED_CDS"/>
    <property type="molecule type" value="Genomic_DNA"/>
</dbReference>
<dbReference type="EMBL" id="BC020572">
    <property type="protein sequence ID" value="AAH20572.2"/>
    <property type="molecule type" value="mRNA"/>
</dbReference>
<dbReference type="EMBL" id="BC020575">
    <property type="protein sequence ID" value="AAH20575.2"/>
    <property type="molecule type" value="mRNA"/>
</dbReference>
<dbReference type="EMBL" id="BC031285">
    <property type="protein sequence ID" value="AAH31285.1"/>
    <property type="molecule type" value="mRNA"/>
</dbReference>
<dbReference type="EMBL" id="AL713709">
    <property type="protein sequence ID" value="CAD28506.1"/>
    <property type="status" value="ALT_INIT"/>
    <property type="molecule type" value="mRNA"/>
</dbReference>
<dbReference type="CCDS" id="CCDS5726.1">
    <molecule id="Q8NEE6-1"/>
</dbReference>
<dbReference type="RefSeq" id="NP_001104508.1">
    <molecule id="Q8NEE6-3"/>
    <property type="nucleotide sequence ID" value="NM_001111038.2"/>
</dbReference>
<dbReference type="RefSeq" id="NP_001274079.1">
    <molecule id="Q8NEE6-2"/>
    <property type="nucleotide sequence ID" value="NM_001287150.2"/>
</dbReference>
<dbReference type="RefSeq" id="NP_659469.3">
    <molecule id="Q8NEE6-1"/>
    <property type="nucleotide sequence ID" value="NM_145032.3"/>
</dbReference>
<dbReference type="RefSeq" id="XP_005250266.1">
    <property type="nucleotide sequence ID" value="XM_005250209.2"/>
</dbReference>
<dbReference type="RefSeq" id="XP_011514232.1">
    <molecule id="Q8NEE6-1"/>
    <property type="nucleotide sequence ID" value="XM_011515930.3"/>
</dbReference>
<dbReference type="RefSeq" id="XP_016867342.1">
    <molecule id="Q8NEE6-1"/>
    <property type="nucleotide sequence ID" value="XM_017011853.2"/>
</dbReference>
<dbReference type="SMR" id="Q8NEE6"/>
<dbReference type="BioGRID" id="128792">
    <property type="interactions" value="42"/>
</dbReference>
<dbReference type="ComplexPortal" id="CPX-2241">
    <property type="entry name" value="SCF E3 ubiquitin ligase complex, FBXL13 variant"/>
</dbReference>
<dbReference type="ComplexPortal" id="CPX-8086">
    <property type="entry name" value="Nexin-dynein regulatory complex"/>
</dbReference>
<dbReference type="FunCoup" id="Q8NEE6">
    <property type="interactions" value="130"/>
</dbReference>
<dbReference type="IntAct" id="Q8NEE6">
    <property type="interactions" value="5"/>
</dbReference>
<dbReference type="MINT" id="Q8NEE6"/>
<dbReference type="STRING" id="9606.ENSP00000321927"/>
<dbReference type="GlyGen" id="Q8NEE6">
    <property type="glycosylation" value="1 site, 1 O-linked glycan (1 site)"/>
</dbReference>
<dbReference type="iPTMnet" id="Q8NEE6"/>
<dbReference type="PhosphoSitePlus" id="Q8NEE6"/>
<dbReference type="SwissPalm" id="Q8NEE6"/>
<dbReference type="BioMuta" id="FBXL13"/>
<dbReference type="DMDM" id="311033450"/>
<dbReference type="jPOST" id="Q8NEE6"/>
<dbReference type="MassIVE" id="Q8NEE6"/>
<dbReference type="PaxDb" id="9606-ENSP00000321927"/>
<dbReference type="PeptideAtlas" id="Q8NEE6"/>
<dbReference type="ProteomicsDB" id="73152">
    <molecule id="Q8NEE6-1"/>
</dbReference>
<dbReference type="ProteomicsDB" id="73153">
    <molecule id="Q8NEE6-2"/>
</dbReference>
<dbReference type="ProteomicsDB" id="73154">
    <molecule id="Q8NEE6-3"/>
</dbReference>
<dbReference type="ProteomicsDB" id="73155">
    <molecule id="Q8NEE6-4"/>
</dbReference>
<dbReference type="Antibodypedia" id="31140">
    <property type="antibodies" value="104 antibodies from 20 providers"/>
</dbReference>
<dbReference type="DNASU" id="222235"/>
<dbReference type="Ensembl" id="ENST00000313221.8">
    <molecule id="Q8NEE6-1"/>
    <property type="protein sequence ID" value="ENSP00000321927.4"/>
    <property type="gene ID" value="ENSG00000161040.19"/>
</dbReference>
<dbReference type="GeneID" id="222235"/>
<dbReference type="KEGG" id="hsa:222235"/>
<dbReference type="UCSC" id="uc003vaq.3">
    <molecule id="Q8NEE6-1"/>
    <property type="organism name" value="human"/>
</dbReference>
<dbReference type="AGR" id="HGNC:21658"/>
<dbReference type="CTD" id="222235"/>
<dbReference type="DisGeNET" id="222235"/>
<dbReference type="GeneCards" id="FBXL13"/>
<dbReference type="HGNC" id="HGNC:21658">
    <property type="gene designation" value="FBXL13"/>
</dbReference>
<dbReference type="HPA" id="ENSG00000161040">
    <property type="expression patterns" value="Tissue enhanced (stomach, testis)"/>
</dbReference>
<dbReference type="MIM" id="609080">
    <property type="type" value="gene"/>
</dbReference>
<dbReference type="neXtProt" id="NX_Q8NEE6"/>
<dbReference type="OpenTargets" id="ENSG00000161040"/>
<dbReference type="PharmGKB" id="PA134938720"/>
<dbReference type="VEuPathDB" id="HostDB:ENSG00000161040"/>
<dbReference type="eggNOG" id="KOG1947">
    <property type="taxonomic scope" value="Eukaryota"/>
</dbReference>
<dbReference type="GeneTree" id="ENSGT00940000160224"/>
<dbReference type="HOGENOM" id="CLU_012282_0_0_1"/>
<dbReference type="InParanoid" id="Q8NEE6"/>
<dbReference type="OMA" id="ARCHYLH"/>
<dbReference type="OrthoDB" id="61560at2759"/>
<dbReference type="PAN-GO" id="Q8NEE6">
    <property type="GO annotations" value="2 GO annotations based on evolutionary models"/>
</dbReference>
<dbReference type="PhylomeDB" id="Q8NEE6"/>
<dbReference type="TreeFam" id="TF329711"/>
<dbReference type="PathwayCommons" id="Q8NEE6"/>
<dbReference type="Reactome" id="R-HSA-8951664">
    <property type="pathway name" value="Neddylation"/>
</dbReference>
<dbReference type="Reactome" id="R-HSA-983168">
    <property type="pathway name" value="Antigen processing: Ubiquitination &amp; Proteasome degradation"/>
</dbReference>
<dbReference type="SignaLink" id="Q8NEE6"/>
<dbReference type="BioGRID-ORCS" id="222235">
    <property type="hits" value="18 hits in 1195 CRISPR screens"/>
</dbReference>
<dbReference type="ChiTaRS" id="FBXL13">
    <property type="organism name" value="human"/>
</dbReference>
<dbReference type="GenomeRNAi" id="222235"/>
<dbReference type="Pharos" id="Q8NEE6">
    <property type="development level" value="Tbio"/>
</dbReference>
<dbReference type="PRO" id="PR:Q8NEE6"/>
<dbReference type="Proteomes" id="UP000005640">
    <property type="component" value="Chromosome 7"/>
</dbReference>
<dbReference type="RNAct" id="Q8NEE6">
    <property type="molecule type" value="protein"/>
</dbReference>
<dbReference type="Bgee" id="ENSG00000161040">
    <property type="expression patterns" value="Expressed in sperm and 110 other cell types or tissues"/>
</dbReference>
<dbReference type="ExpressionAtlas" id="Q8NEE6">
    <property type="expression patterns" value="baseline and differential"/>
</dbReference>
<dbReference type="GO" id="GO:0005813">
    <property type="term" value="C:centrosome"/>
    <property type="evidence" value="ECO:0007669"/>
    <property type="project" value="UniProtKB-SubCell"/>
</dbReference>
<dbReference type="GO" id="GO:0005829">
    <property type="term" value="C:cytosol"/>
    <property type="evidence" value="ECO:0000304"/>
    <property type="project" value="Reactome"/>
</dbReference>
<dbReference type="GO" id="GO:0031514">
    <property type="term" value="C:motile cilium"/>
    <property type="evidence" value="ECO:0007669"/>
    <property type="project" value="UniProtKB-KW"/>
</dbReference>
<dbReference type="GO" id="GO:0019005">
    <property type="term" value="C:SCF ubiquitin ligase complex"/>
    <property type="evidence" value="ECO:0000318"/>
    <property type="project" value="GO_Central"/>
</dbReference>
<dbReference type="GO" id="GO:0031146">
    <property type="term" value="P:SCF-dependent proteasomal ubiquitin-dependent protein catabolic process"/>
    <property type="evidence" value="ECO:0000318"/>
    <property type="project" value="GO_Central"/>
</dbReference>
<dbReference type="CDD" id="cd22124">
    <property type="entry name" value="F-box_FBXL13"/>
    <property type="match status" value="1"/>
</dbReference>
<dbReference type="FunFam" id="3.80.10.10:FF:000134">
    <property type="entry name" value="F-box and leucine rich repeat protein 13"/>
    <property type="match status" value="1"/>
</dbReference>
<dbReference type="FunFam" id="3.80.10.10:FF:000266">
    <property type="entry name" value="F-box and leucine rich repeat protein 13"/>
    <property type="match status" value="1"/>
</dbReference>
<dbReference type="FunFam" id="3.80.10.10:FF:000291">
    <property type="entry name" value="F-box and leucine rich repeat protein 13"/>
    <property type="match status" value="1"/>
</dbReference>
<dbReference type="Gene3D" id="3.80.10.10">
    <property type="entry name" value="Ribonuclease Inhibitor"/>
    <property type="match status" value="3"/>
</dbReference>
<dbReference type="InterPro" id="IPR036047">
    <property type="entry name" value="F-box-like_dom_sf"/>
</dbReference>
<dbReference type="InterPro" id="IPR001810">
    <property type="entry name" value="F-box_dom"/>
</dbReference>
<dbReference type="InterPro" id="IPR001611">
    <property type="entry name" value="Leu-rich_rpt"/>
</dbReference>
<dbReference type="InterPro" id="IPR006553">
    <property type="entry name" value="Leu-rich_rpt_Cys-con_subtyp"/>
</dbReference>
<dbReference type="InterPro" id="IPR032675">
    <property type="entry name" value="LRR_dom_sf"/>
</dbReference>
<dbReference type="PANTHER" id="PTHR13318">
    <property type="entry name" value="PARTNER OF PAIRED, ISOFORM B-RELATED"/>
    <property type="match status" value="1"/>
</dbReference>
<dbReference type="Pfam" id="PF12937">
    <property type="entry name" value="F-box-like"/>
    <property type="match status" value="1"/>
</dbReference>
<dbReference type="Pfam" id="PF13516">
    <property type="entry name" value="LRR_6"/>
    <property type="match status" value="4"/>
</dbReference>
<dbReference type="SMART" id="SM00367">
    <property type="entry name" value="LRR_CC"/>
    <property type="match status" value="14"/>
</dbReference>
<dbReference type="SUPFAM" id="SSF81383">
    <property type="entry name" value="F-box domain"/>
    <property type="match status" value="1"/>
</dbReference>
<dbReference type="SUPFAM" id="SSF52047">
    <property type="entry name" value="RNI-like"/>
    <property type="match status" value="2"/>
</dbReference>
<dbReference type="PROSITE" id="PS50181">
    <property type="entry name" value="FBOX"/>
    <property type="match status" value="1"/>
</dbReference>
<feature type="chain" id="PRO_0000119859" description="F-box and leucine-rich repeat protein 13">
    <location>
        <begin position="1"/>
        <end position="735"/>
    </location>
</feature>
<feature type="domain" description="F-box" evidence="4">
    <location>
        <begin position="152"/>
        <end position="198"/>
    </location>
</feature>
<feature type="repeat" description="LRR 1">
    <location>
        <begin position="230"/>
        <end position="254"/>
    </location>
</feature>
<feature type="repeat" description="LRR 2">
    <location>
        <begin position="255"/>
        <end position="280"/>
    </location>
</feature>
<feature type="repeat" description="LRR 3">
    <location>
        <begin position="281"/>
        <end position="305"/>
    </location>
</feature>
<feature type="repeat" description="LRR 4">
    <location>
        <begin position="306"/>
        <end position="333"/>
    </location>
</feature>
<feature type="repeat" description="LRR 5">
    <location>
        <begin position="334"/>
        <end position="359"/>
    </location>
</feature>
<feature type="repeat" description="LRR 6">
    <location>
        <begin position="360"/>
        <end position="385"/>
    </location>
</feature>
<feature type="repeat" description="LRR 7">
    <location>
        <begin position="386"/>
        <end position="406"/>
    </location>
</feature>
<feature type="repeat" description="LRR 8">
    <location>
        <begin position="410"/>
        <end position="435"/>
    </location>
</feature>
<feature type="repeat" description="LRR 9">
    <location>
        <begin position="436"/>
        <end position="460"/>
    </location>
</feature>
<feature type="repeat" description="LRR 10">
    <location>
        <begin position="461"/>
        <end position="488"/>
    </location>
</feature>
<feature type="repeat" description="LRR 11">
    <location>
        <begin position="489"/>
        <end position="514"/>
    </location>
</feature>
<feature type="repeat" description="LRR 12">
    <location>
        <begin position="515"/>
        <end position="538"/>
    </location>
</feature>
<feature type="repeat" description="LRR 13">
    <location>
        <begin position="539"/>
        <end position="563"/>
    </location>
</feature>
<feature type="repeat" description="LRR 14">
    <location>
        <begin position="564"/>
        <end position="589"/>
    </location>
</feature>
<feature type="repeat" description="LRR 15">
    <location>
        <begin position="590"/>
        <end position="615"/>
    </location>
</feature>
<feature type="repeat" description="LRR 16">
    <location>
        <begin position="616"/>
        <end position="641"/>
    </location>
</feature>
<feature type="repeat" description="LRR 17">
    <location>
        <begin position="642"/>
        <end position="667"/>
    </location>
</feature>
<feature type="region of interest" description="Disordered" evidence="5">
    <location>
        <begin position="682"/>
        <end position="703"/>
    </location>
</feature>
<feature type="compositionally biased region" description="Polar residues" evidence="5">
    <location>
        <begin position="682"/>
        <end position="692"/>
    </location>
</feature>
<feature type="splice variant" id="VSP_013003" description="In isoform 4." evidence="10">
    <location>
        <begin position="337"/>
        <end position="618"/>
    </location>
</feature>
<feature type="splice variant" id="VSP_013004" description="In isoform 2." evidence="9">
    <location>
        <begin position="546"/>
        <end position="573"/>
    </location>
</feature>
<feature type="splice variant" id="VSP_013005" description="In isoform 3." evidence="10">
    <location>
        <begin position="574"/>
        <end position="618"/>
    </location>
</feature>
<feature type="sequence variant" id="VAR_021480" description="In dbSNP:rs7805950." evidence="6 7">
    <original>I</original>
    <variation>M</variation>
    <location>
        <position position="74"/>
    </location>
</feature>
<feature type="sequence variant" id="VAR_031426" description="In dbSNP:rs17135923.">
    <original>G</original>
    <variation>A</variation>
    <location>
        <position position="313"/>
    </location>
</feature>
<feature type="sequence variant" id="VAR_031427" description="In dbSNP:rs17135873.">
    <original>I</original>
    <variation>V</variation>
    <location>
        <position position="535"/>
    </location>
</feature>
<feature type="sequence variant" id="VAR_031428" description="In dbSNP:rs17136118.">
    <original>Y</original>
    <variation>C</variation>
    <location>
        <position position="565"/>
    </location>
</feature>
<feature type="sequence variant" id="VAR_031429" description="In dbSNP:rs17852944." evidence="7">
    <original>D</original>
    <variation>G</variation>
    <location>
        <position position="692"/>
    </location>
</feature>
<feature type="sequence conflict" description="In Ref. 1; AAR13262." evidence="12" ref="1">
    <original>I</original>
    <variation>V</variation>
    <location>
        <position position="110"/>
    </location>
</feature>
<feature type="sequence conflict" description="In Ref. 1; AAR13263." evidence="12" ref="1">
    <original>I</original>
    <variation>V</variation>
    <location>
        <position position="337"/>
    </location>
</feature>
<feature type="sequence conflict" description="In Ref. 5; CAD28506." evidence="12" ref="5">
    <original>S</original>
    <variation>F</variation>
    <location>
        <position position="496"/>
    </location>
</feature>
<feature type="sequence conflict" description="In Ref. 1; AAR13263." evidence="12" ref="1">
    <original>K</original>
    <variation>E</variation>
    <location>
        <position position="674"/>
    </location>
</feature>